<accession>Q0BYC9</accession>
<keyword id="KW-1185">Reference proteome</keyword>
<keyword id="KW-0687">Ribonucleoprotein</keyword>
<keyword id="KW-0689">Ribosomal protein</keyword>
<keyword id="KW-0694">RNA-binding</keyword>
<keyword id="KW-0699">rRNA-binding</keyword>
<proteinExistence type="inferred from homology"/>
<dbReference type="EMBL" id="CP000158">
    <property type="protein sequence ID" value="ABI75728.1"/>
    <property type="molecule type" value="Genomic_DNA"/>
</dbReference>
<dbReference type="RefSeq" id="WP_011647811.1">
    <property type="nucleotide sequence ID" value="NC_008358.1"/>
</dbReference>
<dbReference type="SMR" id="Q0BYC9"/>
<dbReference type="STRING" id="228405.HNE_2836"/>
<dbReference type="KEGG" id="hne:HNE_2836"/>
<dbReference type="eggNOG" id="COG0097">
    <property type="taxonomic scope" value="Bacteria"/>
</dbReference>
<dbReference type="HOGENOM" id="CLU_065464_1_2_5"/>
<dbReference type="Proteomes" id="UP000001959">
    <property type="component" value="Chromosome"/>
</dbReference>
<dbReference type="GO" id="GO:0022625">
    <property type="term" value="C:cytosolic large ribosomal subunit"/>
    <property type="evidence" value="ECO:0007669"/>
    <property type="project" value="TreeGrafter"/>
</dbReference>
<dbReference type="GO" id="GO:0019843">
    <property type="term" value="F:rRNA binding"/>
    <property type="evidence" value="ECO:0007669"/>
    <property type="project" value="UniProtKB-UniRule"/>
</dbReference>
<dbReference type="GO" id="GO:0003735">
    <property type="term" value="F:structural constituent of ribosome"/>
    <property type="evidence" value="ECO:0007669"/>
    <property type="project" value="InterPro"/>
</dbReference>
<dbReference type="GO" id="GO:0002181">
    <property type="term" value="P:cytoplasmic translation"/>
    <property type="evidence" value="ECO:0007669"/>
    <property type="project" value="TreeGrafter"/>
</dbReference>
<dbReference type="FunFam" id="3.90.930.12:FF:000001">
    <property type="entry name" value="50S ribosomal protein L6"/>
    <property type="match status" value="1"/>
</dbReference>
<dbReference type="Gene3D" id="3.90.930.12">
    <property type="entry name" value="Ribosomal protein L6, alpha-beta domain"/>
    <property type="match status" value="2"/>
</dbReference>
<dbReference type="HAMAP" id="MF_01365_B">
    <property type="entry name" value="Ribosomal_uL6_B"/>
    <property type="match status" value="1"/>
</dbReference>
<dbReference type="InterPro" id="IPR000702">
    <property type="entry name" value="Ribosomal_uL6-like"/>
</dbReference>
<dbReference type="InterPro" id="IPR036789">
    <property type="entry name" value="Ribosomal_uL6-like_a/b-dom_sf"/>
</dbReference>
<dbReference type="InterPro" id="IPR020040">
    <property type="entry name" value="Ribosomal_uL6_a/b-dom"/>
</dbReference>
<dbReference type="InterPro" id="IPR019906">
    <property type="entry name" value="Ribosomal_uL6_bac-type"/>
</dbReference>
<dbReference type="InterPro" id="IPR002358">
    <property type="entry name" value="Ribosomal_uL6_CS"/>
</dbReference>
<dbReference type="NCBIfam" id="TIGR03654">
    <property type="entry name" value="L6_bact"/>
    <property type="match status" value="1"/>
</dbReference>
<dbReference type="PANTHER" id="PTHR11655">
    <property type="entry name" value="60S/50S RIBOSOMAL PROTEIN L6/L9"/>
    <property type="match status" value="1"/>
</dbReference>
<dbReference type="PANTHER" id="PTHR11655:SF14">
    <property type="entry name" value="LARGE RIBOSOMAL SUBUNIT PROTEIN UL6M"/>
    <property type="match status" value="1"/>
</dbReference>
<dbReference type="Pfam" id="PF00347">
    <property type="entry name" value="Ribosomal_L6"/>
    <property type="match status" value="2"/>
</dbReference>
<dbReference type="PIRSF" id="PIRSF002162">
    <property type="entry name" value="Ribosomal_L6"/>
    <property type="match status" value="1"/>
</dbReference>
<dbReference type="PRINTS" id="PR00059">
    <property type="entry name" value="RIBOSOMALL6"/>
</dbReference>
<dbReference type="SUPFAM" id="SSF56053">
    <property type="entry name" value="Ribosomal protein L6"/>
    <property type="match status" value="2"/>
</dbReference>
<dbReference type="PROSITE" id="PS00525">
    <property type="entry name" value="RIBOSOMAL_L6_1"/>
    <property type="match status" value="1"/>
</dbReference>
<protein>
    <recommendedName>
        <fullName evidence="1">Large ribosomal subunit protein uL6</fullName>
    </recommendedName>
    <alternativeName>
        <fullName evidence="2">50S ribosomal protein L6</fullName>
    </alternativeName>
</protein>
<gene>
    <name evidence="1" type="primary">rplF</name>
    <name type="ordered locus">HNE_2836</name>
</gene>
<feature type="chain" id="PRO_0000265260" description="Large ribosomal subunit protein uL6">
    <location>
        <begin position="1"/>
        <end position="203"/>
    </location>
</feature>
<sequence>MSRIGKLAIPVPAGATVTVAGQTIKVKGPKGELELVLPEVITPKFDNNELSVNPRADLIQAANDVIEAETAKGKRPPTFAQSLSQDARTQWGTARARAANMVEGVTKGYSKTLELVGVGYRAQMQGVDLKLALGYSHDVIYKAPQGIKIEAPKPTEIIISGADKQAVGQVAAEIKKFRPPEPYKGKGIRLQGEYVRRKEGKKK</sequence>
<evidence type="ECO:0000255" key="1">
    <source>
        <dbReference type="HAMAP-Rule" id="MF_01365"/>
    </source>
</evidence>
<evidence type="ECO:0000305" key="2"/>
<reference key="1">
    <citation type="journal article" date="2006" name="J. Bacteriol.">
        <title>Comparative genomic evidence for a close relationship between the dimorphic prosthecate bacteria Hyphomonas neptunium and Caulobacter crescentus.</title>
        <authorList>
            <person name="Badger J.H."/>
            <person name="Hoover T.R."/>
            <person name="Brun Y.V."/>
            <person name="Weiner R.M."/>
            <person name="Laub M.T."/>
            <person name="Alexandre G."/>
            <person name="Mrazek J."/>
            <person name="Ren Q."/>
            <person name="Paulsen I.T."/>
            <person name="Nelson K.E."/>
            <person name="Khouri H.M."/>
            <person name="Radune D."/>
            <person name="Sosa J."/>
            <person name="Dodson R.J."/>
            <person name="Sullivan S.A."/>
            <person name="Rosovitz M.J."/>
            <person name="Madupu R."/>
            <person name="Brinkac L.M."/>
            <person name="Durkin A.S."/>
            <person name="Daugherty S.C."/>
            <person name="Kothari S.P."/>
            <person name="Giglio M.G."/>
            <person name="Zhou L."/>
            <person name="Haft D.H."/>
            <person name="Selengut J.D."/>
            <person name="Davidsen T.M."/>
            <person name="Yang Q."/>
            <person name="Zafar N."/>
            <person name="Ward N.L."/>
        </authorList>
    </citation>
    <scope>NUCLEOTIDE SEQUENCE [LARGE SCALE GENOMIC DNA]</scope>
    <source>
        <strain>ATCC 15444</strain>
    </source>
</reference>
<organism>
    <name type="scientific">Hyphomonas neptunium (strain ATCC 15444)</name>
    <dbReference type="NCBI Taxonomy" id="228405"/>
    <lineage>
        <taxon>Bacteria</taxon>
        <taxon>Pseudomonadati</taxon>
        <taxon>Pseudomonadota</taxon>
        <taxon>Alphaproteobacteria</taxon>
        <taxon>Hyphomonadales</taxon>
        <taxon>Hyphomonadaceae</taxon>
        <taxon>Hyphomonas</taxon>
    </lineage>
</organism>
<name>RL6_HYPNA</name>
<comment type="function">
    <text evidence="1">This protein binds to the 23S rRNA, and is important in its secondary structure. It is located near the subunit interface in the base of the L7/L12 stalk, and near the tRNA binding site of the peptidyltransferase center.</text>
</comment>
<comment type="subunit">
    <text evidence="1">Part of the 50S ribosomal subunit.</text>
</comment>
<comment type="similarity">
    <text evidence="1">Belongs to the universal ribosomal protein uL6 family.</text>
</comment>